<reference key="1">
    <citation type="journal article" date="2001" name="Genomics">
        <title>Phylogenetic conservation of the makorin-2 gene, encoding a multiple zinc-finger protein, antisense to the raf1 proto-oncogene.</title>
        <authorList>
            <person name="Gray T.A."/>
            <person name="Azama K."/>
            <person name="Whitmore K."/>
            <person name="Min A."/>
            <person name="Abe S."/>
            <person name="Nicholls R.D."/>
        </authorList>
    </citation>
    <scope>NUCLEOTIDE SEQUENCE [MRNA]</scope>
</reference>
<reference key="2">
    <citation type="submission" date="2004-01" db="EMBL/GenBank/DDBJ databases">
        <authorList>
            <consortium name="NIH - Zebrafish Gene Collection (ZGC) project"/>
        </authorList>
    </citation>
    <scope>NUCLEOTIDE SEQUENCE [LARGE SCALE MRNA]</scope>
    <source>
        <tissue>Embryo</tissue>
    </source>
</reference>
<proteinExistence type="evidence at transcript level"/>
<name>MKRN2_DANRE</name>
<keyword id="KW-0963">Cytoplasm</keyword>
<keyword id="KW-0217">Developmental protein</keyword>
<keyword id="KW-0221">Differentiation</keyword>
<keyword id="KW-0479">Metal-binding</keyword>
<keyword id="KW-0524">Neurogenesis</keyword>
<keyword id="KW-0539">Nucleus</keyword>
<keyword id="KW-1185">Reference proteome</keyword>
<keyword id="KW-0677">Repeat</keyword>
<keyword id="KW-0804">Transcription</keyword>
<keyword id="KW-0805">Transcription regulation</keyword>
<keyword id="KW-0808">Transferase</keyword>
<keyword id="KW-0833">Ubl conjugation pathway</keyword>
<keyword id="KW-0862">Zinc</keyword>
<keyword id="KW-0863">Zinc-finger</keyword>
<organism>
    <name type="scientific">Danio rerio</name>
    <name type="common">Zebrafish</name>
    <name type="synonym">Brachydanio rerio</name>
    <dbReference type="NCBI Taxonomy" id="7955"/>
    <lineage>
        <taxon>Eukaryota</taxon>
        <taxon>Metazoa</taxon>
        <taxon>Chordata</taxon>
        <taxon>Craniata</taxon>
        <taxon>Vertebrata</taxon>
        <taxon>Euteleostomi</taxon>
        <taxon>Actinopterygii</taxon>
        <taxon>Neopterygii</taxon>
        <taxon>Teleostei</taxon>
        <taxon>Ostariophysi</taxon>
        <taxon>Cypriniformes</taxon>
        <taxon>Danionidae</taxon>
        <taxon>Danioninae</taxon>
        <taxon>Danio</taxon>
    </lineage>
</organism>
<feature type="chain" id="PRO_0000055957" description="E3 ubiquitin-protein ligase makorin-2">
    <location>
        <begin position="1"/>
        <end position="414"/>
    </location>
</feature>
<feature type="zinc finger region" description="C3H1-type 1" evidence="4">
    <location>
        <begin position="2"/>
        <end position="29"/>
    </location>
</feature>
<feature type="zinc finger region" description="C3H1-type 2" evidence="4">
    <location>
        <begin position="31"/>
        <end position="58"/>
    </location>
</feature>
<feature type="zinc finger region" description="C3H1-type 3" evidence="4">
    <location>
        <begin position="164"/>
        <end position="191"/>
    </location>
</feature>
<feature type="zinc finger region" description="RING-type" evidence="3">
    <location>
        <begin position="237"/>
        <end position="291"/>
    </location>
</feature>
<feature type="zinc finger region" description="C3H1-type 4" evidence="4">
    <location>
        <begin position="320"/>
        <end position="349"/>
    </location>
</feature>
<feature type="region of interest" description="Disordered" evidence="5">
    <location>
        <begin position="57"/>
        <end position="94"/>
    </location>
</feature>
<feature type="region of interest" description="Makorin-type Cys-His">
    <location>
        <begin position="192"/>
        <end position="221"/>
    </location>
</feature>
<feature type="compositionally biased region" description="Low complexity" evidence="5">
    <location>
        <begin position="73"/>
        <end position="82"/>
    </location>
</feature>
<feature type="sequence conflict" description="In Ref. 2; AAH65352." evidence="6" ref="2">
    <original>N</original>
    <variation>H</variation>
    <location>
        <position position="89"/>
    </location>
</feature>
<feature type="sequence conflict" description="In Ref. 1; AAG27597." evidence="6" ref="1">
    <original>N</original>
    <variation>S</variation>
    <location>
        <position position="122"/>
    </location>
</feature>
<feature type="sequence conflict" description="In Ref. 2; AAH65352." evidence="6" ref="2">
    <original>T</original>
    <variation>A</variation>
    <location>
        <position position="155"/>
    </location>
</feature>
<sequence>MSTKQVTCRYFLHGVCREGSRCLFSHDLTTSKPSTICKYYQRGACAYGDRCRYDHIKPPGRGSGAPADHSNRSSSSAGASAPGPGPPANTSKHLKKPLVLRDKALCSDSRPRVFSAESSELNECWEQRDDGAQKPHSYLEAIRSGLDASAAAAATAGTFPELQQTSPQICPFLAAGQCQYGESCPYLHGEMCEICRQHVLHPHDPEQRAAHEKKCMVAFEMDMERAFAVQQSQDKVCKICLDVVYEKSSPSERRFGILSSCAHTYCLNCIRQWRCVEQLHNQIRKSCPECRVVSEFVIPSIYWVEDQEQKNLLIEEFKSGVSKKACKYFDQGRGTCPFGGKCFYMHAYADGRRAEPDKPRKQLSAEGNVRFQNSVRLWDFIEEREHRSVPQLEDEVNDLGELFMQLSGASDAPH</sequence>
<comment type="function">
    <text evidence="1 2">E3 ubiquitin ligase catalyzing the covalent attachment of ubiquitin moieties onto substrate proteins (By similarity). Inhibits neurogenesis and axis formation during embryonic development by modulating the phosphatidylinositol 3-kinase (PI3K) pathway (By similarity). Acts downstream of PI3K and akt1 to up-regulate gsk3b mRNA expression (By similarity).</text>
</comment>
<comment type="catalytic activity">
    <reaction evidence="2">
        <text>S-ubiquitinyl-[E2 ubiquitin-conjugating enzyme]-L-cysteine + [acceptor protein]-L-lysine = [E2 ubiquitin-conjugating enzyme]-L-cysteine + N(6)-ubiquitinyl-[acceptor protein]-L-lysine.</text>
        <dbReference type="EC" id="2.3.2.27"/>
    </reaction>
</comment>
<comment type="pathway">
    <text>Protein modification; protein ubiquitination.</text>
</comment>
<comment type="subcellular location">
    <subcellularLocation>
        <location evidence="2">Cytoplasm</location>
    </subcellularLocation>
    <subcellularLocation>
        <location evidence="2">Nucleus</location>
    </subcellularLocation>
</comment>
<protein>
    <recommendedName>
        <fullName>E3 ubiquitin-protein ligase makorin-2</fullName>
        <ecNumber evidence="2">2.3.2.27</ecNumber>
    </recommendedName>
    <alternativeName>
        <fullName evidence="6">RING-type E3 ubiquitin transferase makorin-2</fullName>
    </alternativeName>
</protein>
<dbReference type="EC" id="2.3.2.27" evidence="2"/>
<dbReference type="EMBL" id="AF277172">
    <property type="protein sequence ID" value="AAG27597.1"/>
    <property type="molecule type" value="mRNA"/>
</dbReference>
<dbReference type="EMBL" id="BC065352">
    <property type="protein sequence ID" value="AAH65352.1"/>
    <property type="molecule type" value="mRNA"/>
</dbReference>
<dbReference type="RefSeq" id="NP_694511.1">
    <property type="nucleotide sequence ID" value="NM_152979.2"/>
</dbReference>
<dbReference type="RefSeq" id="XP_005155725.1">
    <property type="nucleotide sequence ID" value="XM_005155668.3"/>
</dbReference>
<dbReference type="FunCoup" id="Q9DFG8">
    <property type="interactions" value="1337"/>
</dbReference>
<dbReference type="STRING" id="7955.ENSDARP00000110314"/>
<dbReference type="PaxDb" id="7955-ENSDARP00000016210"/>
<dbReference type="GeneID" id="170783"/>
<dbReference type="KEGG" id="dre:170783"/>
<dbReference type="AGR" id="ZFIN:ZDB-GENE-020213-2"/>
<dbReference type="CTD" id="23609"/>
<dbReference type="ZFIN" id="ZDB-GENE-020213-2">
    <property type="gene designation" value="mkrn2"/>
</dbReference>
<dbReference type="eggNOG" id="KOG1039">
    <property type="taxonomic scope" value="Eukaryota"/>
</dbReference>
<dbReference type="InParanoid" id="Q9DFG8"/>
<dbReference type="OrthoDB" id="411372at2759"/>
<dbReference type="PhylomeDB" id="Q9DFG8"/>
<dbReference type="TreeFam" id="TF315108"/>
<dbReference type="UniPathway" id="UPA00143"/>
<dbReference type="PRO" id="PR:Q9DFG8"/>
<dbReference type="Proteomes" id="UP000000437">
    <property type="component" value="Chromosome 11"/>
</dbReference>
<dbReference type="GO" id="GO:0005737">
    <property type="term" value="C:cytoplasm"/>
    <property type="evidence" value="ECO:0000250"/>
    <property type="project" value="UniProtKB"/>
</dbReference>
<dbReference type="GO" id="GO:0005634">
    <property type="term" value="C:nucleus"/>
    <property type="evidence" value="ECO:0000250"/>
    <property type="project" value="UniProtKB"/>
</dbReference>
<dbReference type="GO" id="GO:0061630">
    <property type="term" value="F:ubiquitin protein ligase activity"/>
    <property type="evidence" value="ECO:0000250"/>
    <property type="project" value="UniProtKB"/>
</dbReference>
<dbReference type="GO" id="GO:0008270">
    <property type="term" value="F:zinc ion binding"/>
    <property type="evidence" value="ECO:0007669"/>
    <property type="project" value="UniProtKB-KW"/>
</dbReference>
<dbReference type="GO" id="GO:0030154">
    <property type="term" value="P:cell differentiation"/>
    <property type="evidence" value="ECO:0007669"/>
    <property type="project" value="UniProtKB-KW"/>
</dbReference>
<dbReference type="GO" id="GO:0006351">
    <property type="term" value="P:DNA-templated transcription"/>
    <property type="evidence" value="ECO:0000250"/>
    <property type="project" value="UniProtKB"/>
</dbReference>
<dbReference type="GO" id="GO:0002862">
    <property type="term" value="P:negative regulation of inflammatory response to antigenic stimulus"/>
    <property type="evidence" value="ECO:0000250"/>
    <property type="project" value="UniProtKB"/>
</dbReference>
<dbReference type="GO" id="GO:1901223">
    <property type="term" value="P:negative regulation of non-canonical NF-kappaB signal transduction"/>
    <property type="evidence" value="ECO:0000250"/>
    <property type="project" value="UniProtKB"/>
</dbReference>
<dbReference type="GO" id="GO:0007399">
    <property type="term" value="P:nervous system development"/>
    <property type="evidence" value="ECO:0007669"/>
    <property type="project" value="UniProtKB-KW"/>
</dbReference>
<dbReference type="GO" id="GO:0043491">
    <property type="term" value="P:phosphatidylinositol 3-kinase/protein kinase B signal transduction"/>
    <property type="evidence" value="ECO:0000250"/>
    <property type="project" value="UniProtKB"/>
</dbReference>
<dbReference type="GO" id="GO:0045944">
    <property type="term" value="P:positive regulation of transcription by RNA polymerase II"/>
    <property type="evidence" value="ECO:0000250"/>
    <property type="project" value="UniProtKB"/>
</dbReference>
<dbReference type="GO" id="GO:0000209">
    <property type="term" value="P:protein polyubiquitination"/>
    <property type="evidence" value="ECO:0007669"/>
    <property type="project" value="InterPro"/>
</dbReference>
<dbReference type="GO" id="GO:0016567">
    <property type="term" value="P:protein ubiquitination"/>
    <property type="evidence" value="ECO:0000318"/>
    <property type="project" value="GO_Central"/>
</dbReference>
<dbReference type="GO" id="GO:0010842">
    <property type="term" value="P:retina layer formation"/>
    <property type="evidence" value="ECO:0000316"/>
    <property type="project" value="ZFIN"/>
</dbReference>
<dbReference type="GO" id="GO:0006511">
    <property type="term" value="P:ubiquitin-dependent protein catabolic process"/>
    <property type="evidence" value="ECO:0000250"/>
    <property type="project" value="UniProtKB"/>
</dbReference>
<dbReference type="FunFam" id="3.30.40.10:FF:000117">
    <property type="entry name" value="Probable E3 ubiquitin-protein ligase makorin-1"/>
    <property type="match status" value="1"/>
</dbReference>
<dbReference type="Gene3D" id="2.30.30.1190">
    <property type="match status" value="1"/>
</dbReference>
<dbReference type="Gene3D" id="1.20.120.1350">
    <property type="entry name" value="Pneumovirus matrix protein 2 (M2), zinc-binding domain"/>
    <property type="match status" value="1"/>
</dbReference>
<dbReference type="Gene3D" id="4.10.1000.10">
    <property type="entry name" value="Zinc finger, CCCH-type"/>
    <property type="match status" value="1"/>
</dbReference>
<dbReference type="Gene3D" id="3.30.40.10">
    <property type="entry name" value="Zinc/RING finger domain, C3HC4 (zinc finger)"/>
    <property type="match status" value="1"/>
</dbReference>
<dbReference type="InterPro" id="IPR045072">
    <property type="entry name" value="MKRN-like"/>
</dbReference>
<dbReference type="InterPro" id="IPR041367">
    <property type="entry name" value="Znf-CCCH_4"/>
</dbReference>
<dbReference type="InterPro" id="IPR018957">
    <property type="entry name" value="Znf_C3HC4_RING-type"/>
</dbReference>
<dbReference type="InterPro" id="IPR000571">
    <property type="entry name" value="Znf_CCCH"/>
</dbReference>
<dbReference type="InterPro" id="IPR036855">
    <property type="entry name" value="Znf_CCCH_sf"/>
</dbReference>
<dbReference type="InterPro" id="IPR001841">
    <property type="entry name" value="Znf_RING"/>
</dbReference>
<dbReference type="InterPro" id="IPR013083">
    <property type="entry name" value="Znf_RING/FYVE/PHD"/>
</dbReference>
<dbReference type="InterPro" id="IPR017907">
    <property type="entry name" value="Znf_RING_CS"/>
</dbReference>
<dbReference type="PANTHER" id="PTHR11224:SF17">
    <property type="entry name" value="E3 UBIQUITIN-PROTEIN LIGASE MAKORIN-2"/>
    <property type="match status" value="1"/>
</dbReference>
<dbReference type="PANTHER" id="PTHR11224">
    <property type="entry name" value="MAKORIN-RELATED"/>
    <property type="match status" value="1"/>
</dbReference>
<dbReference type="Pfam" id="PF00097">
    <property type="entry name" value="zf-C3HC4"/>
    <property type="match status" value="1"/>
</dbReference>
<dbReference type="Pfam" id="PF00642">
    <property type="entry name" value="zf-CCCH"/>
    <property type="match status" value="1"/>
</dbReference>
<dbReference type="Pfam" id="PF14608">
    <property type="entry name" value="zf-CCCH_2"/>
    <property type="match status" value="2"/>
</dbReference>
<dbReference type="Pfam" id="PF18044">
    <property type="entry name" value="zf-CCCH_4"/>
    <property type="match status" value="1"/>
</dbReference>
<dbReference type="SMART" id="SM00184">
    <property type="entry name" value="RING"/>
    <property type="match status" value="1"/>
</dbReference>
<dbReference type="SMART" id="SM00356">
    <property type="entry name" value="ZnF_C3H1"/>
    <property type="match status" value="4"/>
</dbReference>
<dbReference type="SUPFAM" id="SSF90229">
    <property type="entry name" value="CCCH zinc finger"/>
    <property type="match status" value="3"/>
</dbReference>
<dbReference type="SUPFAM" id="SSF57850">
    <property type="entry name" value="RING/U-box"/>
    <property type="match status" value="1"/>
</dbReference>
<dbReference type="PROSITE" id="PS50103">
    <property type="entry name" value="ZF_C3H1"/>
    <property type="match status" value="4"/>
</dbReference>
<dbReference type="PROSITE" id="PS00518">
    <property type="entry name" value="ZF_RING_1"/>
    <property type="match status" value="1"/>
</dbReference>
<dbReference type="PROSITE" id="PS50089">
    <property type="entry name" value="ZF_RING_2"/>
    <property type="match status" value="1"/>
</dbReference>
<gene>
    <name type="primary">mkrn2</name>
</gene>
<accession>Q9DFG8</accession>
<accession>Q6P0Z6</accession>
<evidence type="ECO:0000250" key="1">
    <source>
        <dbReference type="UniProtKB" id="B0F0H3"/>
    </source>
</evidence>
<evidence type="ECO:0000250" key="2">
    <source>
        <dbReference type="UniProtKB" id="Q9ERV1"/>
    </source>
</evidence>
<evidence type="ECO:0000255" key="3">
    <source>
        <dbReference type="PROSITE-ProRule" id="PRU00175"/>
    </source>
</evidence>
<evidence type="ECO:0000255" key="4">
    <source>
        <dbReference type="PROSITE-ProRule" id="PRU00723"/>
    </source>
</evidence>
<evidence type="ECO:0000256" key="5">
    <source>
        <dbReference type="SAM" id="MobiDB-lite"/>
    </source>
</evidence>
<evidence type="ECO:0000305" key="6"/>